<accession>Q9SY97</accession>
<accession>Q0WR83</accession>
<accession>Q2V2R9</accession>
<accession>Q43381</accession>
<accession>Q8LCR7</accession>
<sequence length="273" mass="29181">MAAQALVSSSLTSSVQTARQIFGSKPVASASQKKSSFVVKAAATPPVKQGANRPLWFASSQSLSYLDGSLPGDYGFDPLGLSDPEGTGGFIEPRWLAYGEIINGRFAMLGAAGAIAPEILGKAGLIPAETALPWFQTGVIPPAGTYTYWADNYTLFVLEMALMGFAEHRRLQDWYNPGSMGKQYFLGLEKGLAGSGNPAYPGGPFFNPLGFGKDEKSLKELKLKEVKNGRLAMLAILGYFIQGLVTGVGPYQNLLDHLADPVNNNVLTSLKFH</sequence>
<reference key="1">
    <citation type="journal article" date="1994" name="Plant Physiol.">
        <title>An Arabidopsis cab gene homologous to Cab-8 of tomato.</title>
        <authorList>
            <person name="Wang J."/>
            <person name="Zhang H."/>
            <person name="Goodman H.M."/>
        </authorList>
    </citation>
    <scope>NUCLEOTIDE SEQUENCE [MRNA] (ISOFORM 1)</scope>
    <source>
        <strain>cv. Columbia</strain>
        <tissue>Leaf</tissue>
    </source>
</reference>
<reference key="2">
    <citation type="journal article" date="2000" name="Nature">
        <title>Sequence and analysis of chromosome 1 of the plant Arabidopsis thaliana.</title>
        <authorList>
            <person name="Theologis A."/>
            <person name="Ecker J.R."/>
            <person name="Palm C.J."/>
            <person name="Federspiel N.A."/>
            <person name="Kaul S."/>
            <person name="White O."/>
            <person name="Alonso J."/>
            <person name="Altafi H."/>
            <person name="Araujo R."/>
            <person name="Bowman C.L."/>
            <person name="Brooks S.Y."/>
            <person name="Buehler E."/>
            <person name="Chan A."/>
            <person name="Chao Q."/>
            <person name="Chen H."/>
            <person name="Cheuk R.F."/>
            <person name="Chin C.W."/>
            <person name="Chung M.K."/>
            <person name="Conn L."/>
            <person name="Conway A.B."/>
            <person name="Conway A.R."/>
            <person name="Creasy T.H."/>
            <person name="Dewar K."/>
            <person name="Dunn P."/>
            <person name="Etgu P."/>
            <person name="Feldblyum T.V."/>
            <person name="Feng J.-D."/>
            <person name="Fong B."/>
            <person name="Fujii C.Y."/>
            <person name="Gill J.E."/>
            <person name="Goldsmith A.D."/>
            <person name="Haas B."/>
            <person name="Hansen N.F."/>
            <person name="Hughes B."/>
            <person name="Huizar L."/>
            <person name="Hunter J.L."/>
            <person name="Jenkins J."/>
            <person name="Johnson-Hopson C."/>
            <person name="Khan S."/>
            <person name="Khaykin E."/>
            <person name="Kim C.J."/>
            <person name="Koo H.L."/>
            <person name="Kremenetskaia I."/>
            <person name="Kurtz D.B."/>
            <person name="Kwan A."/>
            <person name="Lam B."/>
            <person name="Langin-Hooper S."/>
            <person name="Lee A."/>
            <person name="Lee J.M."/>
            <person name="Lenz C.A."/>
            <person name="Li J.H."/>
            <person name="Li Y.-P."/>
            <person name="Lin X."/>
            <person name="Liu S.X."/>
            <person name="Liu Z.A."/>
            <person name="Luros J.S."/>
            <person name="Maiti R."/>
            <person name="Marziali A."/>
            <person name="Militscher J."/>
            <person name="Miranda M."/>
            <person name="Nguyen M."/>
            <person name="Nierman W.C."/>
            <person name="Osborne B.I."/>
            <person name="Pai G."/>
            <person name="Peterson J."/>
            <person name="Pham P.K."/>
            <person name="Rizzo M."/>
            <person name="Rooney T."/>
            <person name="Rowley D."/>
            <person name="Sakano H."/>
            <person name="Salzberg S.L."/>
            <person name="Schwartz J.R."/>
            <person name="Shinn P."/>
            <person name="Southwick A.M."/>
            <person name="Sun H."/>
            <person name="Tallon L.J."/>
            <person name="Tambunga G."/>
            <person name="Toriumi M.J."/>
            <person name="Town C.D."/>
            <person name="Utterback T."/>
            <person name="Van Aken S."/>
            <person name="Vaysberg M."/>
            <person name="Vysotskaia V.S."/>
            <person name="Walker M."/>
            <person name="Wu D."/>
            <person name="Yu G."/>
            <person name="Fraser C.M."/>
            <person name="Venter J.C."/>
            <person name="Davis R.W."/>
        </authorList>
    </citation>
    <scope>NUCLEOTIDE SEQUENCE [LARGE SCALE GENOMIC DNA]</scope>
    <source>
        <strain>cv. Columbia</strain>
    </source>
</reference>
<reference key="3">
    <citation type="journal article" date="2017" name="Plant J.">
        <title>Araport11: a complete reannotation of the Arabidopsis thaliana reference genome.</title>
        <authorList>
            <person name="Cheng C.Y."/>
            <person name="Krishnakumar V."/>
            <person name="Chan A.P."/>
            <person name="Thibaud-Nissen F."/>
            <person name="Schobel S."/>
            <person name="Town C.D."/>
        </authorList>
    </citation>
    <scope>GENOME REANNOTATION</scope>
    <source>
        <strain>cv. Columbia</strain>
    </source>
</reference>
<reference key="4">
    <citation type="journal article" date="2003" name="Science">
        <title>Empirical analysis of transcriptional activity in the Arabidopsis genome.</title>
        <authorList>
            <person name="Yamada K."/>
            <person name="Lim J."/>
            <person name="Dale J.M."/>
            <person name="Chen H."/>
            <person name="Shinn P."/>
            <person name="Palm C.J."/>
            <person name="Southwick A.M."/>
            <person name="Wu H.C."/>
            <person name="Kim C.J."/>
            <person name="Nguyen M."/>
            <person name="Pham P.K."/>
            <person name="Cheuk R.F."/>
            <person name="Karlin-Newmann G."/>
            <person name="Liu S.X."/>
            <person name="Lam B."/>
            <person name="Sakano H."/>
            <person name="Wu T."/>
            <person name="Yu G."/>
            <person name="Miranda M."/>
            <person name="Quach H.L."/>
            <person name="Tripp M."/>
            <person name="Chang C.H."/>
            <person name="Lee J.M."/>
            <person name="Toriumi M.J."/>
            <person name="Chan M.M."/>
            <person name="Tang C.C."/>
            <person name="Onodera C.S."/>
            <person name="Deng J.M."/>
            <person name="Akiyama K."/>
            <person name="Ansari Y."/>
            <person name="Arakawa T."/>
            <person name="Banh J."/>
            <person name="Banno F."/>
            <person name="Bowser L."/>
            <person name="Brooks S.Y."/>
            <person name="Carninci P."/>
            <person name="Chao Q."/>
            <person name="Choy N."/>
            <person name="Enju A."/>
            <person name="Goldsmith A.D."/>
            <person name="Gurjal M."/>
            <person name="Hansen N.F."/>
            <person name="Hayashizaki Y."/>
            <person name="Johnson-Hopson C."/>
            <person name="Hsuan V.W."/>
            <person name="Iida K."/>
            <person name="Karnes M."/>
            <person name="Khan S."/>
            <person name="Koesema E."/>
            <person name="Ishida J."/>
            <person name="Jiang P.X."/>
            <person name="Jones T."/>
            <person name="Kawai J."/>
            <person name="Kamiya A."/>
            <person name="Meyers C."/>
            <person name="Nakajima M."/>
            <person name="Narusaka M."/>
            <person name="Seki M."/>
            <person name="Sakurai T."/>
            <person name="Satou M."/>
            <person name="Tamse R."/>
            <person name="Vaysberg M."/>
            <person name="Wallender E.K."/>
            <person name="Wong C."/>
            <person name="Yamamura Y."/>
            <person name="Yuan S."/>
            <person name="Shinozaki K."/>
            <person name="Davis R.W."/>
            <person name="Theologis A."/>
            <person name="Ecker J.R."/>
        </authorList>
    </citation>
    <scope>NUCLEOTIDE SEQUENCE [LARGE SCALE MRNA] (ISOFORM 1)</scope>
    <source>
        <strain>cv. Columbia</strain>
    </source>
</reference>
<reference key="5">
    <citation type="journal article" date="2004" name="Plant Mol. Biol.">
        <title>Lhca5--an LHC-type protein associated with photosystem I.</title>
        <authorList>
            <person name="Ganeteg U."/>
            <person name="Klimmek F."/>
            <person name="Jansson S."/>
        </authorList>
    </citation>
    <scope>INTERACTION WITH LHCA5</scope>
    <scope>INDUCTION BY LIGHT AND COLD</scope>
    <source>
        <strain>cv. C24</strain>
        <strain>cv. Columbia</strain>
    </source>
</reference>
<reference key="6">
    <citation type="submission" date="2006-07" db="EMBL/GenBank/DDBJ databases">
        <title>Large-scale analysis of RIKEN Arabidopsis full-length (RAFL) cDNAs.</title>
        <authorList>
            <person name="Totoki Y."/>
            <person name="Seki M."/>
            <person name="Ishida J."/>
            <person name="Nakajima M."/>
            <person name="Enju A."/>
            <person name="Kamiya A."/>
            <person name="Narusaka M."/>
            <person name="Shin-i T."/>
            <person name="Nakagawa M."/>
            <person name="Sakamoto N."/>
            <person name="Oishi K."/>
            <person name="Kohara Y."/>
            <person name="Kobayashi M."/>
            <person name="Toyoda A."/>
            <person name="Sakaki Y."/>
            <person name="Sakurai T."/>
            <person name="Iida K."/>
            <person name="Akiyama K."/>
            <person name="Satou M."/>
            <person name="Toyoda T."/>
            <person name="Konagaya A."/>
            <person name="Carninci P."/>
            <person name="Kawai J."/>
            <person name="Hayashizaki Y."/>
            <person name="Shinozaki K."/>
        </authorList>
    </citation>
    <scope>NUCLEOTIDE SEQUENCE [LARGE SCALE MRNA] (ISOFORM 1)</scope>
    <source>
        <strain>cv. Columbia</strain>
    </source>
</reference>
<reference key="7">
    <citation type="submission" date="2002-03" db="EMBL/GenBank/DDBJ databases">
        <title>Full-length cDNA from Arabidopsis thaliana.</title>
        <authorList>
            <person name="Brover V.V."/>
            <person name="Troukhan M.E."/>
            <person name="Alexandrov N.A."/>
            <person name="Lu Y.-P."/>
            <person name="Flavell R.B."/>
            <person name="Feldmann K.A."/>
        </authorList>
    </citation>
    <scope>NUCLEOTIDE SEQUENCE [LARGE SCALE MRNA] (ISOFORM 1)</scope>
</reference>
<reference key="8">
    <citation type="journal article" date="1999" name="Trends Plant Sci.">
        <title>A guide to the Lhc genes and their relatives in Arabidopsis.</title>
        <authorList>
            <person name="Jansson S."/>
        </authorList>
    </citation>
    <scope>GENE FAMILY</scope>
    <scope>NOMENCLATURE</scope>
</reference>
<reference key="9">
    <citation type="journal article" date="2000" name="J. Biol. Chem.">
        <title>The PSI-K subunit of photosystem I is involved in the interaction between light-harvesting complex I and the photosystem I reaction center core.</title>
        <authorList>
            <person name="Jensen P.E."/>
            <person name="Gilpin M."/>
            <person name="Knoetzel J."/>
            <person name="Scheller H.V."/>
        </authorList>
    </citation>
    <scope>SUBCELLULAR LOCATION</scope>
    <source>
        <strain>cv. Columbia</strain>
    </source>
</reference>
<reference key="10">
    <citation type="journal article" date="2001" name="Plant Physiol.">
        <title>The properties of the chlorophyll a/b-binding proteins Lhca2 and Lhca3 studied in vivo using antisense inhibition.</title>
        <authorList>
            <person name="Ganeteg U."/>
            <person name="Strand A."/>
            <person name="Gustafsson P."/>
            <person name="Jansson S."/>
        </authorList>
    </citation>
    <scope>DISRUPTION PHENOTYPE</scope>
    <scope>BIOPHYSICOCHEMICAL PROPERTIES</scope>
    <source>
        <strain>cv. Columbia</strain>
    </source>
</reference>
<reference key="11">
    <citation type="journal article" date="2002" name="Biophys. J.">
        <title>Pigment organization and energy transfer dynamics in isolated photosystem I (PSI) complexes from Arabidopsis thaliana depleted of the PSI-G, PSI-K, PSI-L, or PSI-N subunit.</title>
        <authorList>
            <person name="Ihalainen J.A."/>
            <person name="Jensen P.E."/>
            <person name="Haldrup A."/>
            <person name="van Stokkum I.H.M."/>
            <person name="van Grondelle R."/>
            <person name="Scheller H.V."/>
            <person name="Dekker J.P."/>
        </authorList>
    </citation>
    <scope>REVIEW ON PHOTOSYSTEM I ANTENNA</scope>
</reference>
<reference key="12">
    <citation type="journal article" date="2005" name="J. Biol. Chem.">
        <title>Pigment binding, fluorescence properties, and oligomerization behavior of Lhca5, a novel light-harvesting protein.</title>
        <authorList>
            <person name="Storf S."/>
            <person name="Jansson S."/>
            <person name="Schmid V.H.R."/>
        </authorList>
    </citation>
    <scope>COFACTOR</scope>
</reference>
<reference key="13">
    <citation type="journal article" date="2006" name="Biochim. Biophys. Acta">
        <title>Probing the structure of Lhca3 by mutation analysis.</title>
        <authorList>
            <person name="Mozzo M."/>
            <person name="Morosinotto T."/>
            <person name="Bassi R."/>
            <person name="Croce R."/>
        </authorList>
    </citation>
    <scope>MUTAGENESIS OF GLU-100; ASN-103; ARG-105; GLU-159; GLU-167; ARG-170; GLU-225; ASN-228; ARG-230; GLN-242 AND HIS-257</scope>
</reference>
<reference key="14">
    <citation type="journal article" date="2006" name="FEBS Lett.">
        <title>Lhca5 interaction with plant photosystem I.</title>
        <authorList>
            <person name="Lucinski R."/>
            <person name="Schmid V.H."/>
            <person name="Jansson S."/>
            <person name="Klimmek F."/>
        </authorList>
    </citation>
    <scope>INTERACTION WITH LHCA2</scope>
    <source>
        <strain>cv. Columbia</strain>
    </source>
</reference>
<reference key="15">
    <citation type="journal article" date="2007" name="Biochemistry">
        <title>Singlet and triplet state transitions of carotenoids in the antenna complexes of higher-plant photosystem I.</title>
        <authorList>
            <person name="Croce R."/>
            <person name="Mozzo M."/>
            <person name="Morosinotto T."/>
            <person name="Romeo A."/>
            <person name="Hienerwadel R."/>
            <person name="Bassi R."/>
        </authorList>
    </citation>
    <scope>INTERACTION WITH CAROTENOIDS</scope>
    <scope>COFACTOR</scope>
</reference>
<reference key="16">
    <citation type="journal article" date="2009" name="J. Biol. Chem.">
        <title>The role of Lhca complexes in the supramolecular organization of higher plant photosystem I.</title>
        <authorList>
            <person name="Wientjes E."/>
            <person name="Oostergetel G.T."/>
            <person name="Jansson S."/>
            <person name="Boekema E.J."/>
            <person name="Croce R."/>
        </authorList>
    </citation>
    <scope>COFACTOR</scope>
    <scope>SUBUNIT</scope>
</reference>
<reference key="17">
    <citation type="journal article" date="2011" name="Biochem. J.">
        <title>The light-harvesting complexes of higher-plant Photosystem I: Lhca1/4 and Lhca2/3 form two red-emitting heterodimers.</title>
        <authorList>
            <person name="Wientjes E."/>
            <person name="Croce R."/>
        </authorList>
    </citation>
    <scope>SUBUNIT</scope>
    <scope>COFACTOR</scope>
    <source>
        <strain>cv. Columbia</strain>
    </source>
</reference>
<reference key="18">
    <citation type="journal article" date="2011" name="Biophys. J.">
        <title>The role of the individual Lhcas in photosystem I excitation energy trapping.</title>
        <authorList>
            <person name="Wientjes E."/>
            <person name="van Stokkum I.H.M."/>
            <person name="van Amerongen H."/>
            <person name="Croce R."/>
        </authorList>
    </citation>
    <scope>FUNCTION</scope>
    <scope>MISCELLANEOUS</scope>
</reference>
<reference key="19">
    <citation type="journal article" date="2012" name="J. Proteome Res.">
        <title>Identification of phosphoproteins in Arabidopsis thaliana leaves using polyethylene glycol fractionation, immobilized metal-ion affinity chromatography, two-dimensional gel electrophoresis and mass spectrometry.</title>
        <authorList>
            <person name="Aryal U.K."/>
            <person name="Krochko J.E."/>
            <person name="Ross A.R."/>
        </authorList>
    </citation>
    <scope>PHOSPHORYLATION [LARGE SCALE ANALYSIS] AT SER-195</scope>
    <scope>IDENTIFICATION BY MASS SPECTROMETRY [LARGE SCALE ANALYSIS]</scope>
</reference>
<reference key="20">
    <citation type="journal article" date="2007" name="Nature">
        <title>The structure of a plant photosystem I supercomplex at 3.4 A resolution.</title>
        <authorList>
            <person name="Amunts A."/>
            <person name="Drory O."/>
            <person name="Nelson N."/>
        </authorList>
    </citation>
    <scope>X-RAY CRYSTALLOGRAPHY (3.40 ANGSTROMS) OF 95-259</scope>
    <scope>SUBUNIT</scope>
    <scope>COFACTOR</scope>
</reference>
<proteinExistence type="evidence at protein level"/>
<feature type="transit peptide" description="Chloroplast" evidence="2">
    <location>
        <begin position="1"/>
        <end position="39"/>
    </location>
</feature>
<feature type="chain" id="PRO_0000435448" description="Photosystem I chlorophyll a/b-binding protein 3-1, chloroplastic" evidence="3">
    <location>
        <begin position="40"/>
        <end position="273"/>
    </location>
</feature>
<feature type="transmembrane region" description="Helical" evidence="3">
    <location>
        <begin position="106"/>
        <end position="126"/>
    </location>
</feature>
<feature type="transmembrane region" description="Helical" evidence="3">
    <location>
        <begin position="146"/>
        <end position="166"/>
    </location>
</feature>
<feature type="transmembrane region" description="Helical" evidence="3">
    <location>
        <begin position="231"/>
        <end position="251"/>
    </location>
</feature>
<feature type="binding site" description="axial binding residue" evidence="2">
    <location>
        <position position="56"/>
    </location>
    <ligand>
        <name>chlorophyll b</name>
        <dbReference type="ChEBI" id="CHEBI:61721"/>
        <label>1</label>
    </ligand>
    <ligandPart>
        <name>Mg</name>
        <dbReference type="ChEBI" id="CHEBI:25107"/>
    </ligandPart>
</feature>
<feature type="binding site" evidence="1">
    <location>
        <position position="76"/>
    </location>
    <ligand>
        <name>chlorophyll a</name>
        <dbReference type="ChEBI" id="CHEBI:58416"/>
        <label>1</label>
    </ligand>
</feature>
<feature type="binding site" evidence="1">
    <location>
        <position position="82"/>
    </location>
    <ligand>
        <name>chlorophyll a</name>
        <dbReference type="ChEBI" id="CHEBI:58416"/>
        <label>1</label>
    </ligand>
</feature>
<feature type="binding site" description="axial binding residue" evidence="2">
    <location>
        <position position="100"/>
    </location>
    <ligand>
        <name>chlorophyll a</name>
        <dbReference type="ChEBI" id="CHEBI:58416"/>
        <label>1</label>
    </ligand>
    <ligandPart>
        <name>Mg</name>
        <dbReference type="ChEBI" id="CHEBI:25107"/>
    </ligandPart>
</feature>
<feature type="binding site" evidence="1">
    <location>
        <position position="105"/>
    </location>
    <ligand>
        <name>chlorophyll b</name>
        <dbReference type="ChEBI" id="CHEBI:61721"/>
        <label>2</label>
    </ligand>
</feature>
<feature type="binding site" description="axial binding residue" evidence="2">
    <location>
        <position position="140"/>
    </location>
    <ligand>
        <name>chlorophyll b</name>
        <dbReference type="ChEBI" id="CHEBI:61721"/>
        <label>2</label>
    </ligand>
    <ligandPart>
        <name>Mg</name>
        <dbReference type="ChEBI" id="CHEBI:25107"/>
    </ligandPart>
</feature>
<feature type="binding site" description="axial binding residue" evidence="2">
    <location>
        <position position="167"/>
    </location>
    <ligand>
        <name>chlorophyll b</name>
        <dbReference type="ChEBI" id="CHEBI:61721"/>
        <label>3</label>
    </ligand>
    <ligandPart>
        <name>Mg</name>
        <dbReference type="ChEBI" id="CHEBI:25107"/>
    </ligandPart>
</feature>
<feature type="binding site" evidence="1">
    <location>
        <position position="170"/>
    </location>
    <ligand>
        <name>chlorophyll b</name>
        <dbReference type="ChEBI" id="CHEBI:61721"/>
        <label>4</label>
    </ligand>
</feature>
<feature type="binding site" evidence="1">
    <location>
        <position position="224"/>
    </location>
    <ligand>
        <name>chlorophyll a</name>
        <dbReference type="ChEBI" id="CHEBI:58416"/>
        <label>5</label>
    </ligand>
</feature>
<feature type="binding site" description="axial binding residue" evidence="2">
    <location>
        <position position="225"/>
    </location>
    <ligand>
        <name>chlorophyll a</name>
        <dbReference type="ChEBI" id="CHEBI:58416"/>
        <label>3</label>
    </ligand>
    <ligandPart>
        <name>Mg</name>
        <dbReference type="ChEBI" id="CHEBI:25107"/>
    </ligandPart>
</feature>
<feature type="binding site" description="axial binding residue" evidence="2">
    <location>
        <position position="228"/>
    </location>
    <ligand>
        <name>chlorophyll a</name>
        <dbReference type="ChEBI" id="CHEBI:58416"/>
        <label>4</label>
    </ligand>
    <ligandPart>
        <name>Mg</name>
        <dbReference type="ChEBI" id="CHEBI:25107"/>
    </ligandPart>
</feature>
<feature type="binding site" evidence="1">
    <location>
        <position position="230"/>
    </location>
    <ligand>
        <name>chlorophyll a</name>
        <dbReference type="ChEBI" id="CHEBI:58416"/>
        <label>1</label>
    </ligand>
</feature>
<feature type="binding site" description="axial binding residue" evidence="2">
    <location>
        <position position="242"/>
    </location>
    <ligand>
        <name>chlorophyll a</name>
        <dbReference type="ChEBI" id="CHEBI:58416"/>
        <label>5</label>
    </ligand>
    <ligandPart>
        <name>Mg</name>
        <dbReference type="ChEBI" id="CHEBI:25107"/>
    </ligandPart>
</feature>
<feature type="binding site" description="axial binding residue" evidence="2">
    <location>
        <position position="257"/>
    </location>
    <ligand>
        <name>chlorophyll a</name>
        <dbReference type="ChEBI" id="CHEBI:58416"/>
        <label>6</label>
    </ligand>
    <ligandPart>
        <name>Mg</name>
        <dbReference type="ChEBI" id="CHEBI:25107"/>
    </ligandPart>
</feature>
<feature type="binding site" evidence="1">
    <location>
        <position position="272"/>
    </location>
    <ligand>
        <name>chlorophyll b</name>
        <dbReference type="ChEBI" id="CHEBI:61721"/>
        <label>5</label>
    </ligand>
</feature>
<feature type="modified residue" description="Phosphoserine" evidence="19">
    <location>
        <position position="195"/>
    </location>
</feature>
<feature type="splice variant" id="VSP_058097" description="In isoform 2.">
    <original>MAAQALVSSSLTSSVQTARQIFGSKPVASASQKKSSFVVKAAATPPVKQGANRPLWFASSQSLSYLDG</original>
    <variation>MMFKIWRCSDSSC</variation>
    <location>
        <begin position="1"/>
        <end position="68"/>
    </location>
</feature>
<feature type="mutagenesis site" description="Impaired complex formation with chlorophyll; when associated with L-230." evidence="8">
    <original>E</original>
    <variation>V</variation>
    <location>
        <position position="100"/>
    </location>
</feature>
<feature type="mutagenesis site" description="Reduced chlorophyll-b content in pigment complex." evidence="8">
    <original>N</original>
    <variation>F</variation>
    <location>
        <position position="103"/>
    </location>
</feature>
<feature type="mutagenesis site" description="Impaired complex formation with chlorophyll; when associated with V-225." evidence="8">
    <original>R</original>
    <variation>L</variation>
    <location>
        <position position="105"/>
    </location>
</feature>
<feature type="mutagenesis site" description="Reduced chlorophyll-a content in pigment complex." evidence="8">
    <original>E</original>
    <variation>V</variation>
    <location>
        <position position="159"/>
    </location>
</feature>
<feature type="mutagenesis site" description="Reduced chlorophyll-a and chlorophyll-b content in pigment complex; when associated with L-170." evidence="8">
    <original>E</original>
    <variation>V</variation>
    <location>
        <position position="167"/>
    </location>
</feature>
<feature type="mutagenesis site" description="Reduced chlorophyll-a and chlorophyll-b content in pigment complex; when associated with V-167." evidence="8">
    <original>R</original>
    <variation>L</variation>
    <location>
        <position position="170"/>
    </location>
</feature>
<feature type="mutagenesis site" description="Impaired complex formation with chlorophyll; when associated with L-105." evidence="8">
    <original>E</original>
    <variation>V</variation>
    <location>
        <position position="225"/>
    </location>
</feature>
<feature type="mutagenesis site" description="Reduced chlorophyll-a content in pigment complex." evidence="8">
    <original>N</original>
    <variation>V</variation>
    <location>
        <position position="228"/>
    </location>
</feature>
<feature type="mutagenesis site" description="Impaired complex formation with chlorophyll; when associated with V-100." evidence="8">
    <original>R</original>
    <variation>L</variation>
    <location>
        <position position="230"/>
    </location>
</feature>
<feature type="mutagenesis site" description="Impaired complex formation with chlorophyll." evidence="8">
    <original>Q</original>
    <variation>L</variation>
    <location>
        <position position="242"/>
    </location>
</feature>
<feature type="mutagenesis site" description="Reduced chlorophyll-a content in pigment complex." evidence="8">
    <original>H</original>
    <variation>F</variation>
    <location>
        <position position="257"/>
    </location>
</feature>
<feature type="sequence conflict" description="In Ref. 1; AAA18206." evidence="16" ref="1">
    <original>T</original>
    <variation>A</variation>
    <location>
        <position position="44"/>
    </location>
</feature>
<feature type="sequence conflict" description="In Ref. 1; AAA18206." evidence="16" ref="1">
    <original>F</original>
    <variation>V</variation>
    <location>
        <position position="57"/>
    </location>
</feature>
<feature type="sequence conflict" description="In Ref. 6; BAF00366." evidence="16" ref="6">
    <original>D</original>
    <variation>G</variation>
    <location>
        <position position="260"/>
    </location>
</feature>
<feature type="strand" evidence="22">
    <location>
        <begin position="56"/>
        <end position="59"/>
    </location>
</feature>
<feature type="helix" evidence="21">
    <location>
        <begin position="62"/>
        <end position="64"/>
    </location>
</feature>
<feature type="helix" evidence="21">
    <location>
        <begin position="93"/>
        <end position="113"/>
    </location>
</feature>
<feature type="helix" evidence="21">
    <location>
        <begin position="116"/>
        <end position="122"/>
    </location>
</feature>
<feature type="strand" evidence="20">
    <location>
        <begin position="125"/>
        <end position="127"/>
    </location>
</feature>
<feature type="turn" evidence="21">
    <location>
        <begin position="128"/>
        <end position="130"/>
    </location>
</feature>
<feature type="helix" evidence="21">
    <location>
        <begin position="134"/>
        <end position="136"/>
    </location>
</feature>
<feature type="strand" evidence="21">
    <location>
        <begin position="137"/>
        <end position="140"/>
    </location>
</feature>
<feature type="helix" evidence="21">
    <location>
        <begin position="141"/>
        <end position="143"/>
    </location>
</feature>
<feature type="strand" evidence="20">
    <location>
        <begin position="147"/>
        <end position="149"/>
    </location>
</feature>
<feature type="helix" evidence="21">
    <location>
        <begin position="152"/>
        <end position="175"/>
    </location>
</feature>
<feature type="helix" evidence="21">
    <location>
        <begin position="179"/>
        <end position="181"/>
    </location>
</feature>
<feature type="turn" evidence="21">
    <location>
        <begin position="189"/>
        <end position="191"/>
    </location>
</feature>
<feature type="helix" evidence="21">
    <location>
        <begin position="203"/>
        <end position="206"/>
    </location>
</feature>
<feature type="helix" evidence="21">
    <location>
        <begin position="215"/>
        <end position="246"/>
    </location>
</feature>
<feature type="helix" evidence="21">
    <location>
        <begin position="250"/>
        <end position="259"/>
    </location>
</feature>
<feature type="turn" evidence="21">
    <location>
        <begin position="261"/>
        <end position="263"/>
    </location>
</feature>
<feature type="helix" evidence="21">
    <location>
        <begin position="266"/>
        <end position="269"/>
    </location>
</feature>
<protein>
    <recommendedName>
        <fullName evidence="15">Photosystem I chlorophyll a/b-binding protein 3-1, chloroplastic</fullName>
        <shortName evidence="15">Lhca3*1</shortName>
    </recommendedName>
    <alternativeName>
        <fullName evidence="16">LHCI type III LHCA3</fullName>
    </alternativeName>
</protein>
<evidence type="ECO:0000250" key="1">
    <source>
        <dbReference type="UniProtKB" id="P07371"/>
    </source>
</evidence>
<evidence type="ECO:0000250" key="2">
    <source>
        <dbReference type="UniProtKB" id="P12333"/>
    </source>
</evidence>
<evidence type="ECO:0000255" key="3"/>
<evidence type="ECO:0000269" key="4">
    <source>
    </source>
</evidence>
<evidence type="ECO:0000269" key="5">
    <source>
    </source>
</evidence>
<evidence type="ECO:0000269" key="6">
    <source>
    </source>
</evidence>
<evidence type="ECO:0000269" key="7">
    <source>
    </source>
</evidence>
<evidence type="ECO:0000269" key="8">
    <source>
    </source>
</evidence>
<evidence type="ECO:0000269" key="9">
    <source>
    </source>
</evidence>
<evidence type="ECO:0000269" key="10">
    <source>
    </source>
</evidence>
<evidence type="ECO:0000269" key="11">
    <source>
    </source>
</evidence>
<evidence type="ECO:0000269" key="12">
    <source>
    </source>
</evidence>
<evidence type="ECO:0000269" key="13">
    <source>
    </source>
</evidence>
<evidence type="ECO:0000269" key="14">
    <source>
    </source>
</evidence>
<evidence type="ECO:0000303" key="15">
    <source>
    </source>
</evidence>
<evidence type="ECO:0000305" key="16"/>
<evidence type="ECO:0000312" key="17">
    <source>
        <dbReference type="Araport" id="AT1G61520"/>
    </source>
</evidence>
<evidence type="ECO:0000312" key="18">
    <source>
        <dbReference type="EMBL" id="AAD25555.1"/>
    </source>
</evidence>
<evidence type="ECO:0007744" key="19">
    <source>
    </source>
</evidence>
<evidence type="ECO:0007829" key="20">
    <source>
        <dbReference type="PDB" id="2O01"/>
    </source>
</evidence>
<evidence type="ECO:0007829" key="21">
    <source>
        <dbReference type="PDB" id="8J6Z"/>
    </source>
</evidence>
<evidence type="ECO:0007829" key="22">
    <source>
        <dbReference type="PDB" id="8J7B"/>
    </source>
</evidence>
<organism>
    <name type="scientific">Arabidopsis thaliana</name>
    <name type="common">Mouse-ear cress</name>
    <dbReference type="NCBI Taxonomy" id="3702"/>
    <lineage>
        <taxon>Eukaryota</taxon>
        <taxon>Viridiplantae</taxon>
        <taxon>Streptophyta</taxon>
        <taxon>Embryophyta</taxon>
        <taxon>Tracheophyta</taxon>
        <taxon>Spermatophyta</taxon>
        <taxon>Magnoliopsida</taxon>
        <taxon>eudicotyledons</taxon>
        <taxon>Gunneridae</taxon>
        <taxon>Pentapetalae</taxon>
        <taxon>rosids</taxon>
        <taxon>malvids</taxon>
        <taxon>Brassicales</taxon>
        <taxon>Brassicaceae</taxon>
        <taxon>Camelineae</taxon>
        <taxon>Arabidopsis</taxon>
    </lineage>
</organism>
<dbReference type="EMBL" id="U01103">
    <property type="protein sequence ID" value="AAA18206.1"/>
    <property type="molecule type" value="mRNA"/>
</dbReference>
<dbReference type="EMBL" id="AC005850">
    <property type="protein sequence ID" value="AAD25555.1"/>
    <property type="molecule type" value="Genomic_DNA"/>
</dbReference>
<dbReference type="EMBL" id="CP002684">
    <property type="protein sequence ID" value="AEE33846.1"/>
    <property type="molecule type" value="Genomic_DNA"/>
</dbReference>
<dbReference type="EMBL" id="CP002684">
    <property type="protein sequence ID" value="AEE33847.1"/>
    <property type="molecule type" value="Genomic_DNA"/>
</dbReference>
<dbReference type="EMBL" id="CP002684">
    <property type="protein sequence ID" value="AEE33848.1"/>
    <property type="molecule type" value="Genomic_DNA"/>
</dbReference>
<dbReference type="EMBL" id="AY059879">
    <property type="protein sequence ID" value="AAL24361.1"/>
    <property type="molecule type" value="mRNA"/>
</dbReference>
<dbReference type="EMBL" id="AY093370">
    <property type="protein sequence ID" value="AAM13369.1"/>
    <property type="molecule type" value="mRNA"/>
</dbReference>
<dbReference type="EMBL" id="AK228436">
    <property type="protein sequence ID" value="BAF00366.1"/>
    <property type="molecule type" value="mRNA"/>
</dbReference>
<dbReference type="EMBL" id="AY086439">
    <property type="protein sequence ID" value="AAM63442.1"/>
    <property type="molecule type" value="mRNA"/>
</dbReference>
<dbReference type="PIR" id="E96640">
    <property type="entry name" value="E96640"/>
</dbReference>
<dbReference type="RefSeq" id="NP_001031217.1">
    <molecule id="Q9SY97-2"/>
    <property type="nucleotide sequence ID" value="NM_001036140.1"/>
</dbReference>
<dbReference type="RefSeq" id="NP_001185280.1">
    <molecule id="Q9SY97-1"/>
    <property type="nucleotide sequence ID" value="NM_001198351.1"/>
</dbReference>
<dbReference type="RefSeq" id="NP_176347.1">
    <molecule id="Q9SY97-1"/>
    <property type="nucleotide sequence ID" value="NM_104833.3"/>
</dbReference>
<dbReference type="PDB" id="2O01">
    <property type="method" value="X-ray"/>
    <property type="resolution" value="3.40 A"/>
    <property type="chains" value="3=95-259"/>
</dbReference>
<dbReference type="PDB" id="7WFD">
    <property type="method" value="EM"/>
    <property type="resolution" value="3.25 A"/>
    <property type="chains" value="A3=1-273"/>
</dbReference>
<dbReference type="PDB" id="7WFE">
    <property type="method" value="EM"/>
    <property type="resolution" value="3.25 A"/>
    <property type="chains" value="B3=1-273"/>
</dbReference>
<dbReference type="PDB" id="7WG5">
    <property type="method" value="EM"/>
    <property type="resolution" value="3.89 A"/>
    <property type="chains" value="A3/B3=1-273"/>
</dbReference>
<dbReference type="PDB" id="8J6Z">
    <property type="method" value="EM"/>
    <property type="resolution" value="2.79 A"/>
    <property type="chains" value="3=1-273"/>
</dbReference>
<dbReference type="PDB" id="8J7A">
    <property type="method" value="EM"/>
    <property type="resolution" value="3.06 A"/>
    <property type="chains" value="3=1-273"/>
</dbReference>
<dbReference type="PDB" id="8J7B">
    <property type="method" value="EM"/>
    <property type="resolution" value="3.22 A"/>
    <property type="chains" value="3=1-273"/>
</dbReference>
<dbReference type="PDBsum" id="2O01"/>
<dbReference type="PDBsum" id="7WFD"/>
<dbReference type="PDBsum" id="7WFE"/>
<dbReference type="PDBsum" id="7WG5"/>
<dbReference type="PDBsum" id="8J6Z"/>
<dbReference type="PDBsum" id="8J7A"/>
<dbReference type="PDBsum" id="8J7B"/>
<dbReference type="EMDB" id="EMD-32462"/>
<dbReference type="EMDB" id="EMD-32463"/>
<dbReference type="EMDB" id="EMD-32477"/>
<dbReference type="EMDB" id="EMD-36021"/>
<dbReference type="EMDB" id="EMD-36036"/>
<dbReference type="EMDB" id="EMD-36037"/>
<dbReference type="SMR" id="Q9SY97"/>
<dbReference type="FunCoup" id="Q9SY97">
    <property type="interactions" value="988"/>
</dbReference>
<dbReference type="STRING" id="3702.Q9SY97"/>
<dbReference type="TCDB" id="5.B.4.1.1">
    <property type="family name" value="the plant photosystem i supercomplex (psi) family"/>
</dbReference>
<dbReference type="iPTMnet" id="Q9SY97"/>
<dbReference type="PaxDb" id="3702-AT1G61520.1"/>
<dbReference type="ProMEX" id="Q9SY97"/>
<dbReference type="ProteomicsDB" id="238466">
    <molecule id="Q9SY97-1"/>
</dbReference>
<dbReference type="EnsemblPlants" id="AT1G61520.1">
    <molecule id="Q9SY97-1"/>
    <property type="protein sequence ID" value="AT1G61520.1"/>
    <property type="gene ID" value="AT1G61520"/>
</dbReference>
<dbReference type="EnsemblPlants" id="AT1G61520.2">
    <molecule id="Q9SY97-2"/>
    <property type="protein sequence ID" value="AT1G61520.2"/>
    <property type="gene ID" value="AT1G61520"/>
</dbReference>
<dbReference type="EnsemblPlants" id="AT1G61520.3">
    <molecule id="Q9SY97-1"/>
    <property type="protein sequence ID" value="AT1G61520.3"/>
    <property type="gene ID" value="AT1G61520"/>
</dbReference>
<dbReference type="GeneID" id="842446"/>
<dbReference type="Gramene" id="AT1G61520.1">
    <molecule id="Q9SY97-1"/>
    <property type="protein sequence ID" value="AT1G61520.1"/>
    <property type="gene ID" value="AT1G61520"/>
</dbReference>
<dbReference type="Gramene" id="AT1G61520.2">
    <molecule id="Q9SY97-2"/>
    <property type="protein sequence ID" value="AT1G61520.2"/>
    <property type="gene ID" value="AT1G61520"/>
</dbReference>
<dbReference type="Gramene" id="AT1G61520.3">
    <molecule id="Q9SY97-1"/>
    <property type="protein sequence ID" value="AT1G61520.3"/>
    <property type="gene ID" value="AT1G61520"/>
</dbReference>
<dbReference type="KEGG" id="ath:AT1G61520"/>
<dbReference type="Araport" id="AT1G61520"/>
<dbReference type="TAIR" id="AT1G61520">
    <property type="gene designation" value="LHCA3"/>
</dbReference>
<dbReference type="eggNOG" id="ENOG502QT09">
    <property type="taxonomic scope" value="Eukaryota"/>
</dbReference>
<dbReference type="InParanoid" id="Q9SY97"/>
<dbReference type="OMA" id="MSKQYFL"/>
<dbReference type="OrthoDB" id="423598at2759"/>
<dbReference type="PhylomeDB" id="Q9SY97"/>
<dbReference type="CD-CODE" id="4299E36E">
    <property type="entry name" value="Nucleolus"/>
</dbReference>
<dbReference type="EvolutionaryTrace" id="Q9SY97"/>
<dbReference type="PRO" id="PR:Q9SY97"/>
<dbReference type="Proteomes" id="UP000006548">
    <property type="component" value="Chromosome 1"/>
</dbReference>
<dbReference type="ExpressionAtlas" id="Q9SY97">
    <property type="expression patterns" value="baseline and differential"/>
</dbReference>
<dbReference type="GO" id="GO:0009507">
    <property type="term" value="C:chloroplast"/>
    <property type="evidence" value="ECO:0007005"/>
    <property type="project" value="TAIR"/>
</dbReference>
<dbReference type="GO" id="GO:0009534">
    <property type="term" value="C:chloroplast thylakoid"/>
    <property type="evidence" value="ECO:0007005"/>
    <property type="project" value="TAIR"/>
</dbReference>
<dbReference type="GO" id="GO:0009535">
    <property type="term" value="C:chloroplast thylakoid membrane"/>
    <property type="evidence" value="ECO:0000314"/>
    <property type="project" value="UniProtKB"/>
</dbReference>
<dbReference type="GO" id="GO:0005634">
    <property type="term" value="C:nucleus"/>
    <property type="evidence" value="ECO:0007005"/>
    <property type="project" value="TAIR"/>
</dbReference>
<dbReference type="GO" id="GO:0009522">
    <property type="term" value="C:photosystem I"/>
    <property type="evidence" value="ECO:0007669"/>
    <property type="project" value="UniProtKB-KW"/>
</dbReference>
<dbReference type="GO" id="GO:0010287">
    <property type="term" value="C:plastoglobule"/>
    <property type="evidence" value="ECO:0007005"/>
    <property type="project" value="TAIR"/>
</dbReference>
<dbReference type="GO" id="GO:0009579">
    <property type="term" value="C:thylakoid"/>
    <property type="evidence" value="ECO:0007005"/>
    <property type="project" value="TAIR"/>
</dbReference>
<dbReference type="GO" id="GO:0016168">
    <property type="term" value="F:chlorophyll binding"/>
    <property type="evidence" value="ECO:0007669"/>
    <property type="project" value="UniProtKB-KW"/>
</dbReference>
<dbReference type="GO" id="GO:0046872">
    <property type="term" value="F:metal ion binding"/>
    <property type="evidence" value="ECO:0007669"/>
    <property type="project" value="UniProtKB-KW"/>
</dbReference>
<dbReference type="GO" id="GO:0003729">
    <property type="term" value="F:mRNA binding"/>
    <property type="evidence" value="ECO:0000314"/>
    <property type="project" value="TAIR"/>
</dbReference>
<dbReference type="GO" id="GO:0019904">
    <property type="term" value="F:protein domain specific binding"/>
    <property type="evidence" value="ECO:0000353"/>
    <property type="project" value="CAFA"/>
</dbReference>
<dbReference type="GO" id="GO:0009768">
    <property type="term" value="P:photosynthesis, light harvesting in photosystem I"/>
    <property type="evidence" value="ECO:0000314"/>
    <property type="project" value="UniProtKB"/>
</dbReference>
<dbReference type="GO" id="GO:0009409">
    <property type="term" value="P:response to cold"/>
    <property type="evidence" value="ECO:0000270"/>
    <property type="project" value="UniProtKB"/>
</dbReference>
<dbReference type="GO" id="GO:0009644">
    <property type="term" value="P:response to high light intensity"/>
    <property type="evidence" value="ECO:0000270"/>
    <property type="project" value="UniProtKB"/>
</dbReference>
<dbReference type="GO" id="GO:0009645">
    <property type="term" value="P:response to low light intensity stimulus"/>
    <property type="evidence" value="ECO:0000270"/>
    <property type="project" value="UniProtKB"/>
</dbReference>
<dbReference type="FunFam" id="1.10.3460.10:FF:000006">
    <property type="entry name" value="Chlorophyll a-b binding protein, chloroplastic"/>
    <property type="match status" value="1"/>
</dbReference>
<dbReference type="Gene3D" id="1.10.3460.10">
    <property type="entry name" value="Chlorophyll a/b binding protein domain"/>
    <property type="match status" value="1"/>
</dbReference>
<dbReference type="InterPro" id="IPR001344">
    <property type="entry name" value="Chloro_AB-bd_pln"/>
</dbReference>
<dbReference type="InterPro" id="IPR022796">
    <property type="entry name" value="Chloroa_b-bind"/>
</dbReference>
<dbReference type="PANTHER" id="PTHR21649">
    <property type="entry name" value="CHLOROPHYLL A/B BINDING PROTEIN"/>
    <property type="match status" value="1"/>
</dbReference>
<dbReference type="Pfam" id="PF00504">
    <property type="entry name" value="Chloroa_b-bind"/>
    <property type="match status" value="1"/>
</dbReference>
<dbReference type="SUPFAM" id="SSF103511">
    <property type="entry name" value="Chlorophyll a-b binding protein"/>
    <property type="match status" value="1"/>
</dbReference>
<name>LHCA3_ARATH</name>
<gene>
    <name evidence="15" type="primary">LHCA3</name>
    <name evidence="17" type="ordered locus">At1g61520</name>
    <name evidence="18" type="ORF">T25B24.12</name>
</gene>
<comment type="function">
    <text evidence="14">The light-harvesting complex (LHC) functions as a light receptor, it captures and delivers excitation energy to photosystems with which it is closely associated, here photosystem I.</text>
</comment>
<comment type="cofactor">
    <text evidence="7 10 11 12 13">Binds at least 14 chlorophylls (8 Chl-a and 6 Chl-b) and carotenoids such as lutein and neoxanthin.</text>
</comment>
<comment type="biophysicochemical properties">
    <absorption>
        <max>~715 nm</max>
        <text evidence="5">Emission maxima at 735 nm.</text>
    </absorption>
</comment>
<comment type="subunit">
    <text evidence="6 9 10 11 12 13">The LHC complex consists of chlorophyll a-b binding proteins (PubMed:17476261, PubMed:19139095). Red-emitting heterodimer with LHCA2 (PubMed:17107674, PubMed:21083539). Interacts with LHCA5 (PubMed:15356385). Binds to carotenoids (PubMed:17326666).</text>
</comment>
<comment type="subcellular location">
    <subcellularLocation>
        <location evidence="4">Plastid</location>
        <location evidence="4">Chloroplast thylakoid membrane</location>
        <topology evidence="3">Multi-pass membrane protein</topology>
    </subcellularLocation>
</comment>
<comment type="alternative products">
    <event type="alternative splicing"/>
    <isoform>
        <id>Q9SY97-1</id>
        <name>1</name>
        <sequence type="displayed"/>
    </isoform>
    <isoform>
        <id>Q9SY97-2</id>
        <name>2</name>
        <sequence type="described" ref="VSP_058097"/>
    </isoform>
</comment>
<comment type="induction">
    <text evidence="6">Induced by low light (LL) but repressed by high light (HL). Inhibited by cold.</text>
</comment>
<comment type="domain">
    <text evidence="16">The N-terminus of the protein extends into the stroma where it is involved with adhesion of granal membranes and post-translational modifications; both are believed to mediate the distribution of excitation energy between photosystems I and II.</text>
</comment>
<comment type="PTM">
    <text evidence="2">Photoregulated by reversible phosphorylation of its threonine residues.</text>
</comment>
<comment type="disruption phenotype">
    <text evidence="5">Slight decrease (30 percent) of LHCA2 levels (at protein level).</text>
</comment>
<comment type="miscellaneous">
    <text evidence="14">Light emission at 715-720 nm upon excitation at 440 and 475 nm, and subsequent transfer of excitation energy to the photosystem I core with a relative slow rate of 25 nsec(-1).</text>
</comment>
<comment type="similarity">
    <text evidence="16">Belongs to the light-harvesting chlorophyll a/b-binding (LHC) protein family.</text>
</comment>
<keyword id="KW-0002">3D-structure</keyword>
<keyword id="KW-0025">Alternative splicing</keyword>
<keyword id="KW-0148">Chlorophyll</keyword>
<keyword id="KW-0150">Chloroplast</keyword>
<keyword id="KW-0157">Chromophore</keyword>
<keyword id="KW-0460">Magnesium</keyword>
<keyword id="KW-0472">Membrane</keyword>
<keyword id="KW-0479">Metal-binding</keyword>
<keyword id="KW-0597">Phosphoprotein</keyword>
<keyword id="KW-0602">Photosynthesis</keyword>
<keyword id="KW-0603">Photosystem I</keyword>
<keyword id="KW-0934">Plastid</keyword>
<keyword id="KW-1185">Reference proteome</keyword>
<keyword id="KW-0793">Thylakoid</keyword>
<keyword id="KW-0809">Transit peptide</keyword>
<keyword id="KW-0812">Transmembrane</keyword>
<keyword id="KW-1133">Transmembrane helix</keyword>